<keyword id="KW-0030">Aminoacyl-tRNA synthetase</keyword>
<keyword id="KW-0067">ATP-binding</keyword>
<keyword id="KW-0963">Cytoplasm</keyword>
<keyword id="KW-0436">Ligase</keyword>
<keyword id="KW-0547">Nucleotide-binding</keyword>
<keyword id="KW-0648">Protein biosynthesis</keyword>
<sequence length="587" mass="66559">MTHAPTPPAASNFLRPIIEDDLQANRFQGKLWAGKPGPAALQAQGQPDPARIRTRFPPEPNGYLHIGHAKSICVNFGLARDYGGVCHLRFDDTNPEKEEQEYVDAIIEAVHWLGFDWQADGNDNLYFASDYFEFMYEFAEALVQAGHAYVDEQSAEEIRASRGTLTEPGTDSPWRDRPADESLLRLREMRDGKHPDGSLVLRARIDMASPNINLRDPVMYRVRHATHHRTGNAWCIYPMYSWAHPVEDALEGITHSICTLEFEDQRPFYDWILARLAELGKLARPLPHQYEFARLNLTYVVTSKRKLLQLVREGYVDGWDDPRMPTLFGLRRRGYTPSSIRLFCDRTAVSKSDSRIDYSLLEQAVRDDLDPVAPRSVAVLDPLKLVITNHPEGRSETCSAPRNPHDPQAGVREFPFTRELWIEQDDFREEPPKKYFRLFPGNTVRLKYGYVVRCTGFTKDESGKVVEVQAEYLPDTKSGTPGADSVKVKGNITWVSAAHAVPAQVHLYDRLFADAHPDGGDKDFLACLNPNSKQTVQAWLEPGIEAVPGATWQFERLGYFTVDSKDSRPEAPVLNRIVTLRDSWQAA</sequence>
<name>SYQ_BORPA</name>
<evidence type="ECO:0000255" key="1">
    <source>
        <dbReference type="HAMAP-Rule" id="MF_00126"/>
    </source>
</evidence>
<dbReference type="EC" id="6.1.1.18" evidence="1"/>
<dbReference type="EMBL" id="BX640434">
    <property type="protein sequence ID" value="CAE38862.1"/>
    <property type="molecule type" value="Genomic_DNA"/>
</dbReference>
<dbReference type="RefSeq" id="WP_010929136.1">
    <property type="nucleotide sequence ID" value="NC_002928.3"/>
</dbReference>
<dbReference type="SMR" id="Q7W4T0"/>
<dbReference type="GeneID" id="93205367"/>
<dbReference type="KEGG" id="bpa:BPP3578"/>
<dbReference type="HOGENOM" id="CLU_001882_2_3_4"/>
<dbReference type="Proteomes" id="UP000001421">
    <property type="component" value="Chromosome"/>
</dbReference>
<dbReference type="GO" id="GO:0005829">
    <property type="term" value="C:cytosol"/>
    <property type="evidence" value="ECO:0007669"/>
    <property type="project" value="TreeGrafter"/>
</dbReference>
<dbReference type="GO" id="GO:0005524">
    <property type="term" value="F:ATP binding"/>
    <property type="evidence" value="ECO:0007669"/>
    <property type="project" value="UniProtKB-UniRule"/>
</dbReference>
<dbReference type="GO" id="GO:0004819">
    <property type="term" value="F:glutamine-tRNA ligase activity"/>
    <property type="evidence" value="ECO:0007669"/>
    <property type="project" value="UniProtKB-UniRule"/>
</dbReference>
<dbReference type="GO" id="GO:0006425">
    <property type="term" value="P:glutaminyl-tRNA aminoacylation"/>
    <property type="evidence" value="ECO:0007669"/>
    <property type="project" value="InterPro"/>
</dbReference>
<dbReference type="GO" id="GO:0006424">
    <property type="term" value="P:glutamyl-tRNA aminoacylation"/>
    <property type="evidence" value="ECO:0007669"/>
    <property type="project" value="UniProtKB-UniRule"/>
</dbReference>
<dbReference type="FunFam" id="1.10.1160.10:FF:000001">
    <property type="entry name" value="Glutamine--tRNA ligase"/>
    <property type="match status" value="1"/>
</dbReference>
<dbReference type="FunFam" id="3.90.800.10:FF:000001">
    <property type="entry name" value="Glutamine--tRNA ligase"/>
    <property type="match status" value="1"/>
</dbReference>
<dbReference type="FunFam" id="3.40.50.620:FF:000037">
    <property type="entry name" value="Glutamine--tRNA ligase cytoplasmic"/>
    <property type="match status" value="1"/>
</dbReference>
<dbReference type="Gene3D" id="3.40.50.620">
    <property type="entry name" value="HUPs"/>
    <property type="match status" value="1"/>
</dbReference>
<dbReference type="Gene3D" id="2.40.240.10">
    <property type="entry name" value="Ribosomal Protein L25, Chain P"/>
    <property type="match status" value="2"/>
</dbReference>
<dbReference type="HAMAP" id="MF_00126">
    <property type="entry name" value="Gln_tRNA_synth"/>
    <property type="match status" value="1"/>
</dbReference>
<dbReference type="InterPro" id="IPR001412">
    <property type="entry name" value="aa-tRNA-synth_I_CS"/>
</dbReference>
<dbReference type="InterPro" id="IPR004514">
    <property type="entry name" value="Gln-tRNA-synth"/>
</dbReference>
<dbReference type="InterPro" id="IPR050132">
    <property type="entry name" value="Gln/Glu-tRNA_Ligase"/>
</dbReference>
<dbReference type="InterPro" id="IPR022861">
    <property type="entry name" value="Gln_tRNA_ligase_bac"/>
</dbReference>
<dbReference type="InterPro" id="IPR000924">
    <property type="entry name" value="Glu/Gln-tRNA-synth"/>
</dbReference>
<dbReference type="InterPro" id="IPR020058">
    <property type="entry name" value="Glu/Gln-tRNA-synth_Ib_cat-dom"/>
</dbReference>
<dbReference type="InterPro" id="IPR020059">
    <property type="entry name" value="Glu/Gln-tRNA-synth_Ib_codon-bd"/>
</dbReference>
<dbReference type="InterPro" id="IPR020056">
    <property type="entry name" value="Rbsml_bL25/Gln-tRNA_synth_N"/>
</dbReference>
<dbReference type="InterPro" id="IPR011035">
    <property type="entry name" value="Ribosomal_bL25/Gln-tRNA_synth"/>
</dbReference>
<dbReference type="InterPro" id="IPR014729">
    <property type="entry name" value="Rossmann-like_a/b/a_fold"/>
</dbReference>
<dbReference type="InterPro" id="IPR049437">
    <property type="entry name" value="tRNA-synt_1c_C2"/>
</dbReference>
<dbReference type="NCBIfam" id="TIGR00440">
    <property type="entry name" value="glnS"/>
    <property type="match status" value="1"/>
</dbReference>
<dbReference type="NCBIfam" id="NF011291">
    <property type="entry name" value="PRK14703.1"/>
    <property type="match status" value="1"/>
</dbReference>
<dbReference type="PANTHER" id="PTHR43097:SF5">
    <property type="entry name" value="GLUTAMATE--TRNA LIGASE"/>
    <property type="match status" value="1"/>
</dbReference>
<dbReference type="PANTHER" id="PTHR43097">
    <property type="entry name" value="GLUTAMINE-TRNA LIGASE"/>
    <property type="match status" value="1"/>
</dbReference>
<dbReference type="Pfam" id="PF00749">
    <property type="entry name" value="tRNA-synt_1c"/>
    <property type="match status" value="1"/>
</dbReference>
<dbReference type="Pfam" id="PF03950">
    <property type="entry name" value="tRNA-synt_1c_C"/>
    <property type="match status" value="1"/>
</dbReference>
<dbReference type="Pfam" id="PF20974">
    <property type="entry name" value="tRNA-synt_1c_C2"/>
    <property type="match status" value="1"/>
</dbReference>
<dbReference type="PRINTS" id="PR00987">
    <property type="entry name" value="TRNASYNTHGLU"/>
</dbReference>
<dbReference type="SUPFAM" id="SSF52374">
    <property type="entry name" value="Nucleotidylyl transferase"/>
    <property type="match status" value="1"/>
</dbReference>
<dbReference type="SUPFAM" id="SSF50715">
    <property type="entry name" value="Ribosomal protein L25-like"/>
    <property type="match status" value="1"/>
</dbReference>
<dbReference type="PROSITE" id="PS00178">
    <property type="entry name" value="AA_TRNA_LIGASE_I"/>
    <property type="match status" value="1"/>
</dbReference>
<protein>
    <recommendedName>
        <fullName evidence="1">Glutamine--tRNA ligase</fullName>
        <ecNumber evidence="1">6.1.1.18</ecNumber>
    </recommendedName>
    <alternativeName>
        <fullName evidence="1">Glutaminyl-tRNA synthetase</fullName>
        <shortName evidence="1">GlnRS</shortName>
    </alternativeName>
</protein>
<accession>Q7W4T0</accession>
<proteinExistence type="inferred from homology"/>
<organism>
    <name type="scientific">Bordetella parapertussis (strain 12822 / ATCC BAA-587 / NCTC 13253)</name>
    <dbReference type="NCBI Taxonomy" id="257311"/>
    <lineage>
        <taxon>Bacteria</taxon>
        <taxon>Pseudomonadati</taxon>
        <taxon>Pseudomonadota</taxon>
        <taxon>Betaproteobacteria</taxon>
        <taxon>Burkholderiales</taxon>
        <taxon>Alcaligenaceae</taxon>
        <taxon>Bordetella</taxon>
    </lineage>
</organism>
<feature type="chain" id="PRO_1000095480" description="Glutamine--tRNA ligase">
    <location>
        <begin position="1"/>
        <end position="587"/>
    </location>
</feature>
<feature type="short sequence motif" description="'HIGH' region" evidence="1">
    <location>
        <begin position="58"/>
        <end position="68"/>
    </location>
</feature>
<feature type="short sequence motif" description="'KMSKS' region" evidence="1">
    <location>
        <begin position="301"/>
        <end position="305"/>
    </location>
</feature>
<feature type="binding site" evidence="1">
    <location>
        <begin position="59"/>
        <end position="61"/>
    </location>
    <ligand>
        <name>ATP</name>
        <dbReference type="ChEBI" id="CHEBI:30616"/>
    </ligand>
</feature>
<feature type="binding site" evidence="1">
    <location>
        <begin position="65"/>
        <end position="71"/>
    </location>
    <ligand>
        <name>ATP</name>
        <dbReference type="ChEBI" id="CHEBI:30616"/>
    </ligand>
</feature>
<feature type="binding site" evidence="1">
    <location>
        <position position="91"/>
    </location>
    <ligand>
        <name>L-glutamine</name>
        <dbReference type="ChEBI" id="CHEBI:58359"/>
    </ligand>
</feature>
<feature type="binding site" evidence="1">
    <location>
        <position position="240"/>
    </location>
    <ligand>
        <name>L-glutamine</name>
        <dbReference type="ChEBI" id="CHEBI:58359"/>
    </ligand>
</feature>
<feature type="binding site" evidence="1">
    <location>
        <position position="259"/>
    </location>
    <ligand>
        <name>ATP</name>
        <dbReference type="ChEBI" id="CHEBI:30616"/>
    </ligand>
</feature>
<feature type="binding site" evidence="1">
    <location>
        <begin position="294"/>
        <end position="295"/>
    </location>
    <ligand>
        <name>ATP</name>
        <dbReference type="ChEBI" id="CHEBI:30616"/>
    </ligand>
</feature>
<gene>
    <name evidence="1" type="primary">glnS</name>
    <name type="ordered locus">BPP3578</name>
</gene>
<reference key="1">
    <citation type="journal article" date="2003" name="Nat. Genet.">
        <title>Comparative analysis of the genome sequences of Bordetella pertussis, Bordetella parapertussis and Bordetella bronchiseptica.</title>
        <authorList>
            <person name="Parkhill J."/>
            <person name="Sebaihia M."/>
            <person name="Preston A."/>
            <person name="Murphy L.D."/>
            <person name="Thomson N.R."/>
            <person name="Harris D.E."/>
            <person name="Holden M.T.G."/>
            <person name="Churcher C.M."/>
            <person name="Bentley S.D."/>
            <person name="Mungall K.L."/>
            <person name="Cerdeno-Tarraga A.-M."/>
            <person name="Temple L."/>
            <person name="James K.D."/>
            <person name="Harris B."/>
            <person name="Quail M.A."/>
            <person name="Achtman M."/>
            <person name="Atkin R."/>
            <person name="Baker S."/>
            <person name="Basham D."/>
            <person name="Bason N."/>
            <person name="Cherevach I."/>
            <person name="Chillingworth T."/>
            <person name="Collins M."/>
            <person name="Cronin A."/>
            <person name="Davis P."/>
            <person name="Doggett J."/>
            <person name="Feltwell T."/>
            <person name="Goble A."/>
            <person name="Hamlin N."/>
            <person name="Hauser H."/>
            <person name="Holroyd S."/>
            <person name="Jagels K."/>
            <person name="Leather S."/>
            <person name="Moule S."/>
            <person name="Norberczak H."/>
            <person name="O'Neil S."/>
            <person name="Ormond D."/>
            <person name="Price C."/>
            <person name="Rabbinowitsch E."/>
            <person name="Rutter S."/>
            <person name="Sanders M."/>
            <person name="Saunders D."/>
            <person name="Seeger K."/>
            <person name="Sharp S."/>
            <person name="Simmonds M."/>
            <person name="Skelton J."/>
            <person name="Squares R."/>
            <person name="Squares S."/>
            <person name="Stevens K."/>
            <person name="Unwin L."/>
            <person name="Whitehead S."/>
            <person name="Barrell B.G."/>
            <person name="Maskell D.J."/>
        </authorList>
    </citation>
    <scope>NUCLEOTIDE SEQUENCE [LARGE SCALE GENOMIC DNA]</scope>
    <source>
        <strain>12822 / ATCC BAA-587 / NCTC 13253</strain>
    </source>
</reference>
<comment type="catalytic activity">
    <reaction evidence="1">
        <text>tRNA(Gln) + L-glutamine + ATP = L-glutaminyl-tRNA(Gln) + AMP + diphosphate</text>
        <dbReference type="Rhea" id="RHEA:20121"/>
        <dbReference type="Rhea" id="RHEA-COMP:9662"/>
        <dbReference type="Rhea" id="RHEA-COMP:9681"/>
        <dbReference type="ChEBI" id="CHEBI:30616"/>
        <dbReference type="ChEBI" id="CHEBI:33019"/>
        <dbReference type="ChEBI" id="CHEBI:58359"/>
        <dbReference type="ChEBI" id="CHEBI:78442"/>
        <dbReference type="ChEBI" id="CHEBI:78521"/>
        <dbReference type="ChEBI" id="CHEBI:456215"/>
        <dbReference type="EC" id="6.1.1.18"/>
    </reaction>
</comment>
<comment type="subunit">
    <text evidence="1">Monomer.</text>
</comment>
<comment type="subcellular location">
    <subcellularLocation>
        <location evidence="1">Cytoplasm</location>
    </subcellularLocation>
</comment>
<comment type="similarity">
    <text evidence="1">Belongs to the class-I aminoacyl-tRNA synthetase family.</text>
</comment>